<evidence type="ECO:0000255" key="1">
    <source>
        <dbReference type="HAMAP-Rule" id="MF_00081"/>
    </source>
</evidence>
<reference key="1">
    <citation type="submission" date="2007-03" db="EMBL/GenBank/DDBJ databases">
        <title>Complete sequence of Desulfotomaculum reducens MI-1.</title>
        <authorList>
            <consortium name="US DOE Joint Genome Institute"/>
            <person name="Copeland A."/>
            <person name="Lucas S."/>
            <person name="Lapidus A."/>
            <person name="Barry K."/>
            <person name="Detter J.C."/>
            <person name="Glavina del Rio T."/>
            <person name="Hammon N."/>
            <person name="Israni S."/>
            <person name="Dalin E."/>
            <person name="Tice H."/>
            <person name="Pitluck S."/>
            <person name="Sims D."/>
            <person name="Brettin T."/>
            <person name="Bruce D."/>
            <person name="Han C."/>
            <person name="Tapia R."/>
            <person name="Schmutz J."/>
            <person name="Larimer F."/>
            <person name="Land M."/>
            <person name="Hauser L."/>
            <person name="Kyrpides N."/>
            <person name="Kim E."/>
            <person name="Tebo B.M."/>
            <person name="Richardson P."/>
        </authorList>
    </citation>
    <scope>NUCLEOTIDE SEQUENCE [LARGE SCALE GENOMIC DNA]</scope>
    <source>
        <strain>ATCC BAA-1160 / DSM 100696 / MI-1</strain>
    </source>
</reference>
<name>HRCA_DESRM</name>
<organism>
    <name type="scientific">Desulforamulus reducens (strain ATCC BAA-1160 / DSM 100696 / MI-1)</name>
    <name type="common">Desulfotomaculum reducens</name>
    <dbReference type="NCBI Taxonomy" id="349161"/>
    <lineage>
        <taxon>Bacteria</taxon>
        <taxon>Bacillati</taxon>
        <taxon>Bacillota</taxon>
        <taxon>Clostridia</taxon>
        <taxon>Eubacteriales</taxon>
        <taxon>Peptococcaceae</taxon>
        <taxon>Desulforamulus</taxon>
    </lineage>
</organism>
<sequence>MKMDERKQQILLAIIKDYINTAEPVGSRTISRKYKLGVSPATIRNEMSDLEEMGYIEQPHTSAGRIPSNLGYRYYVDCLMQREQLSEEEEVTIRRGYENKVREVGEVLNRTGRMMAQLTHYTALVQMPSFRRSAYKHVQMVLMGPSQAILIVVMDTGAVHHQMMTVPESITQQDLDQISSVLNAKLQGRTMDNIRLTLIKEIYFELSKHRSILDLALELMQDRVISVAEDKIYLEGVFNILNQPEFHNVERVKILLSLLEQEDTLKDILDFTRDRQGITIKIGNENLRQEIQDCSMVTATYQVGDKILGTIGVLGPTRMDYARVVTVIDCMSRNLSRTLDRILKGQV</sequence>
<dbReference type="EMBL" id="CP000612">
    <property type="protein sequence ID" value="ABO51009.1"/>
    <property type="molecule type" value="Genomic_DNA"/>
</dbReference>
<dbReference type="RefSeq" id="WP_011878807.1">
    <property type="nucleotide sequence ID" value="NC_009253.1"/>
</dbReference>
<dbReference type="SMR" id="A4J7F6"/>
<dbReference type="STRING" id="349161.Dred_2499"/>
<dbReference type="KEGG" id="drm:Dred_2499"/>
<dbReference type="eggNOG" id="COG1420">
    <property type="taxonomic scope" value="Bacteria"/>
</dbReference>
<dbReference type="HOGENOM" id="CLU_050019_1_0_9"/>
<dbReference type="OrthoDB" id="9783139at2"/>
<dbReference type="Proteomes" id="UP000001556">
    <property type="component" value="Chromosome"/>
</dbReference>
<dbReference type="GO" id="GO:0003677">
    <property type="term" value="F:DNA binding"/>
    <property type="evidence" value="ECO:0007669"/>
    <property type="project" value="InterPro"/>
</dbReference>
<dbReference type="GO" id="GO:0045892">
    <property type="term" value="P:negative regulation of DNA-templated transcription"/>
    <property type="evidence" value="ECO:0007669"/>
    <property type="project" value="UniProtKB-UniRule"/>
</dbReference>
<dbReference type="FunFam" id="1.10.10.10:FF:000049">
    <property type="entry name" value="Heat-inducible transcription repressor HrcA"/>
    <property type="match status" value="1"/>
</dbReference>
<dbReference type="Gene3D" id="3.30.450.40">
    <property type="match status" value="1"/>
</dbReference>
<dbReference type="Gene3D" id="3.30.390.60">
    <property type="entry name" value="Heat-inducible transcription repressor hrca homolog, domain 3"/>
    <property type="match status" value="1"/>
</dbReference>
<dbReference type="Gene3D" id="1.10.10.10">
    <property type="entry name" value="Winged helix-like DNA-binding domain superfamily/Winged helix DNA-binding domain"/>
    <property type="match status" value="1"/>
</dbReference>
<dbReference type="HAMAP" id="MF_00081">
    <property type="entry name" value="HrcA"/>
    <property type="match status" value="1"/>
</dbReference>
<dbReference type="InterPro" id="IPR029016">
    <property type="entry name" value="GAF-like_dom_sf"/>
</dbReference>
<dbReference type="InterPro" id="IPR002571">
    <property type="entry name" value="HrcA"/>
</dbReference>
<dbReference type="InterPro" id="IPR021153">
    <property type="entry name" value="HrcA_C"/>
</dbReference>
<dbReference type="InterPro" id="IPR036388">
    <property type="entry name" value="WH-like_DNA-bd_sf"/>
</dbReference>
<dbReference type="InterPro" id="IPR036390">
    <property type="entry name" value="WH_DNA-bd_sf"/>
</dbReference>
<dbReference type="InterPro" id="IPR023120">
    <property type="entry name" value="WHTH_transcript_rep_HrcA_IDD"/>
</dbReference>
<dbReference type="NCBIfam" id="TIGR00331">
    <property type="entry name" value="hrcA"/>
    <property type="match status" value="1"/>
</dbReference>
<dbReference type="PANTHER" id="PTHR34824">
    <property type="entry name" value="HEAT-INDUCIBLE TRANSCRIPTION REPRESSOR HRCA"/>
    <property type="match status" value="1"/>
</dbReference>
<dbReference type="PANTHER" id="PTHR34824:SF1">
    <property type="entry name" value="HEAT-INDUCIBLE TRANSCRIPTION REPRESSOR HRCA"/>
    <property type="match status" value="1"/>
</dbReference>
<dbReference type="Pfam" id="PF01628">
    <property type="entry name" value="HrcA"/>
    <property type="match status" value="1"/>
</dbReference>
<dbReference type="PIRSF" id="PIRSF005485">
    <property type="entry name" value="HrcA"/>
    <property type="match status" value="1"/>
</dbReference>
<dbReference type="SUPFAM" id="SSF55781">
    <property type="entry name" value="GAF domain-like"/>
    <property type="match status" value="1"/>
</dbReference>
<dbReference type="SUPFAM" id="SSF46785">
    <property type="entry name" value="Winged helix' DNA-binding domain"/>
    <property type="match status" value="1"/>
</dbReference>
<comment type="function">
    <text evidence="1">Negative regulator of class I heat shock genes (grpE-dnaK-dnaJ and groELS operons). Prevents heat-shock induction of these operons.</text>
</comment>
<comment type="similarity">
    <text evidence="1">Belongs to the HrcA family.</text>
</comment>
<gene>
    <name evidence="1" type="primary">hrcA</name>
    <name type="ordered locus">Dred_2499</name>
</gene>
<accession>A4J7F6</accession>
<feature type="chain" id="PRO_1000071213" description="Heat-inducible transcription repressor HrcA">
    <location>
        <begin position="1"/>
        <end position="347"/>
    </location>
</feature>
<proteinExistence type="inferred from homology"/>
<protein>
    <recommendedName>
        <fullName evidence="1">Heat-inducible transcription repressor HrcA</fullName>
    </recommendedName>
</protein>
<keyword id="KW-1185">Reference proteome</keyword>
<keyword id="KW-0678">Repressor</keyword>
<keyword id="KW-0346">Stress response</keyword>
<keyword id="KW-0804">Transcription</keyword>
<keyword id="KW-0805">Transcription regulation</keyword>